<sequence length="361" mass="39137">MAGNTLGQLFRVTTFGESHGLALGCIVDGVPPGIPLTEADLQHDLDRRRPGTSRYTTQRREPDQVKILSGVFEGVTTGTSIGLLIENTDQRSQDYSAIKDVFRPGHADYTYEQKYGLRDYRGGGRSSARETAMRVAAGAIAKKYLAEKHGIVIQGCLTQMGDIPLEIKDWQQVEQNPFFCPDPDKIDALDELMRALKKEGDSIGAKVTVVANGVPAGLGEPVFDRLDADIAHALMSINAVKGVEIGDGFDVVALRGSQNRDEITKEGFLSNHAGGILGGISSGQQIVAHMALKPTSSITVPGRTINRFGEEVEMITKGRHDPCVGIRAVPIAEAMLAIVLMDHLLRQRAQNADVKTDIPRW</sequence>
<proteinExistence type="inferred from homology"/>
<feature type="chain" id="PRO_1000022479" description="Chorismate synthase">
    <location>
        <begin position="1"/>
        <end position="361"/>
    </location>
</feature>
<feature type="binding site" evidence="1">
    <location>
        <position position="48"/>
    </location>
    <ligand>
        <name>NADP(+)</name>
        <dbReference type="ChEBI" id="CHEBI:58349"/>
    </ligand>
</feature>
<feature type="binding site" evidence="1">
    <location>
        <position position="54"/>
    </location>
    <ligand>
        <name>NADP(+)</name>
        <dbReference type="ChEBI" id="CHEBI:58349"/>
    </ligand>
</feature>
<feature type="binding site" evidence="1">
    <location>
        <begin position="125"/>
        <end position="127"/>
    </location>
    <ligand>
        <name>FMN</name>
        <dbReference type="ChEBI" id="CHEBI:58210"/>
    </ligand>
</feature>
<feature type="binding site" evidence="1">
    <location>
        <begin position="238"/>
        <end position="239"/>
    </location>
    <ligand>
        <name>FMN</name>
        <dbReference type="ChEBI" id="CHEBI:58210"/>
    </ligand>
</feature>
<feature type="binding site" evidence="1">
    <location>
        <position position="278"/>
    </location>
    <ligand>
        <name>FMN</name>
        <dbReference type="ChEBI" id="CHEBI:58210"/>
    </ligand>
</feature>
<feature type="binding site" evidence="1">
    <location>
        <begin position="293"/>
        <end position="297"/>
    </location>
    <ligand>
        <name>FMN</name>
        <dbReference type="ChEBI" id="CHEBI:58210"/>
    </ligand>
</feature>
<feature type="binding site" evidence="1">
    <location>
        <position position="319"/>
    </location>
    <ligand>
        <name>FMN</name>
        <dbReference type="ChEBI" id="CHEBI:58210"/>
    </ligand>
</feature>
<protein>
    <recommendedName>
        <fullName evidence="1">Chorismate synthase</fullName>
        <shortName evidence="1">CS</shortName>
        <ecNumber evidence="1">4.2.3.5</ecNumber>
    </recommendedName>
    <alternativeName>
        <fullName evidence="1">5-enolpyruvylshikimate-3-phosphate phospholyase</fullName>
    </alternativeName>
</protein>
<gene>
    <name evidence="1" type="primary">aroC</name>
    <name type="ordered locus">CKO_00456</name>
</gene>
<keyword id="KW-0028">Amino-acid biosynthesis</keyword>
<keyword id="KW-0057">Aromatic amino acid biosynthesis</keyword>
<keyword id="KW-0274">FAD</keyword>
<keyword id="KW-0285">Flavoprotein</keyword>
<keyword id="KW-0288">FMN</keyword>
<keyword id="KW-0456">Lyase</keyword>
<keyword id="KW-0521">NADP</keyword>
<keyword id="KW-1185">Reference proteome</keyword>
<name>AROC_CITK8</name>
<accession>A8ADP9</accession>
<dbReference type="EC" id="4.2.3.5" evidence="1"/>
<dbReference type="EMBL" id="CP000822">
    <property type="protein sequence ID" value="ABV11612.1"/>
    <property type="molecule type" value="Genomic_DNA"/>
</dbReference>
<dbReference type="RefSeq" id="WP_012131439.1">
    <property type="nucleotide sequence ID" value="NC_009792.1"/>
</dbReference>
<dbReference type="SMR" id="A8ADP9"/>
<dbReference type="STRING" id="290338.CKO_00456"/>
<dbReference type="GeneID" id="45134703"/>
<dbReference type="KEGG" id="cko:CKO_00456"/>
<dbReference type="HOGENOM" id="CLU_034547_0_2_6"/>
<dbReference type="OrthoDB" id="9771806at2"/>
<dbReference type="UniPathway" id="UPA00053">
    <property type="reaction ID" value="UER00090"/>
</dbReference>
<dbReference type="Proteomes" id="UP000008148">
    <property type="component" value="Chromosome"/>
</dbReference>
<dbReference type="GO" id="GO:0005829">
    <property type="term" value="C:cytosol"/>
    <property type="evidence" value="ECO:0007669"/>
    <property type="project" value="TreeGrafter"/>
</dbReference>
<dbReference type="GO" id="GO:0004107">
    <property type="term" value="F:chorismate synthase activity"/>
    <property type="evidence" value="ECO:0007669"/>
    <property type="project" value="UniProtKB-UniRule"/>
</dbReference>
<dbReference type="GO" id="GO:0010181">
    <property type="term" value="F:FMN binding"/>
    <property type="evidence" value="ECO:0007669"/>
    <property type="project" value="TreeGrafter"/>
</dbReference>
<dbReference type="GO" id="GO:0008652">
    <property type="term" value="P:amino acid biosynthetic process"/>
    <property type="evidence" value="ECO:0007669"/>
    <property type="project" value="UniProtKB-KW"/>
</dbReference>
<dbReference type="GO" id="GO:0009073">
    <property type="term" value="P:aromatic amino acid family biosynthetic process"/>
    <property type="evidence" value="ECO:0007669"/>
    <property type="project" value="UniProtKB-KW"/>
</dbReference>
<dbReference type="GO" id="GO:0009423">
    <property type="term" value="P:chorismate biosynthetic process"/>
    <property type="evidence" value="ECO:0007669"/>
    <property type="project" value="UniProtKB-UniRule"/>
</dbReference>
<dbReference type="CDD" id="cd07304">
    <property type="entry name" value="Chorismate_synthase"/>
    <property type="match status" value="1"/>
</dbReference>
<dbReference type="FunFam" id="3.60.150.10:FF:000001">
    <property type="entry name" value="Chorismate synthase"/>
    <property type="match status" value="1"/>
</dbReference>
<dbReference type="Gene3D" id="3.60.150.10">
    <property type="entry name" value="Chorismate synthase AroC"/>
    <property type="match status" value="1"/>
</dbReference>
<dbReference type="HAMAP" id="MF_00300">
    <property type="entry name" value="Chorismate_synth"/>
    <property type="match status" value="1"/>
</dbReference>
<dbReference type="InterPro" id="IPR000453">
    <property type="entry name" value="Chorismate_synth"/>
</dbReference>
<dbReference type="InterPro" id="IPR035904">
    <property type="entry name" value="Chorismate_synth_AroC_sf"/>
</dbReference>
<dbReference type="InterPro" id="IPR020541">
    <property type="entry name" value="Chorismate_synthase_CS"/>
</dbReference>
<dbReference type="NCBIfam" id="TIGR00033">
    <property type="entry name" value="aroC"/>
    <property type="match status" value="1"/>
</dbReference>
<dbReference type="NCBIfam" id="NF003793">
    <property type="entry name" value="PRK05382.1"/>
    <property type="match status" value="1"/>
</dbReference>
<dbReference type="PANTHER" id="PTHR21085">
    <property type="entry name" value="CHORISMATE SYNTHASE"/>
    <property type="match status" value="1"/>
</dbReference>
<dbReference type="PANTHER" id="PTHR21085:SF0">
    <property type="entry name" value="CHORISMATE SYNTHASE"/>
    <property type="match status" value="1"/>
</dbReference>
<dbReference type="Pfam" id="PF01264">
    <property type="entry name" value="Chorismate_synt"/>
    <property type="match status" value="1"/>
</dbReference>
<dbReference type="PIRSF" id="PIRSF001456">
    <property type="entry name" value="Chorismate_synth"/>
    <property type="match status" value="1"/>
</dbReference>
<dbReference type="SUPFAM" id="SSF103263">
    <property type="entry name" value="Chorismate synthase, AroC"/>
    <property type="match status" value="1"/>
</dbReference>
<dbReference type="PROSITE" id="PS00787">
    <property type="entry name" value="CHORISMATE_SYNTHASE_1"/>
    <property type="match status" value="1"/>
</dbReference>
<dbReference type="PROSITE" id="PS00788">
    <property type="entry name" value="CHORISMATE_SYNTHASE_2"/>
    <property type="match status" value="1"/>
</dbReference>
<dbReference type="PROSITE" id="PS00789">
    <property type="entry name" value="CHORISMATE_SYNTHASE_3"/>
    <property type="match status" value="1"/>
</dbReference>
<comment type="function">
    <text evidence="1">Catalyzes the anti-1,4-elimination of the C-3 phosphate and the C-6 proR hydrogen from 5-enolpyruvylshikimate-3-phosphate (EPSP) to yield chorismate, which is the branch point compound that serves as the starting substrate for the three terminal pathways of aromatic amino acid biosynthesis. This reaction introduces a second double bond into the aromatic ring system.</text>
</comment>
<comment type="catalytic activity">
    <reaction evidence="1">
        <text>5-O-(1-carboxyvinyl)-3-phosphoshikimate = chorismate + phosphate</text>
        <dbReference type="Rhea" id="RHEA:21020"/>
        <dbReference type="ChEBI" id="CHEBI:29748"/>
        <dbReference type="ChEBI" id="CHEBI:43474"/>
        <dbReference type="ChEBI" id="CHEBI:57701"/>
        <dbReference type="EC" id="4.2.3.5"/>
    </reaction>
</comment>
<comment type="cofactor">
    <cofactor evidence="1">
        <name>FMNH2</name>
        <dbReference type="ChEBI" id="CHEBI:57618"/>
    </cofactor>
    <text evidence="1">Reduced FMN (FMNH(2)).</text>
</comment>
<comment type="pathway">
    <text evidence="1">Metabolic intermediate biosynthesis; chorismate biosynthesis; chorismate from D-erythrose 4-phosphate and phosphoenolpyruvate: step 7/7.</text>
</comment>
<comment type="subunit">
    <text evidence="1">Homotetramer.</text>
</comment>
<comment type="similarity">
    <text evidence="1">Belongs to the chorismate synthase family.</text>
</comment>
<organism>
    <name type="scientific">Citrobacter koseri (strain ATCC BAA-895 / CDC 4225-83 / SGSC4696)</name>
    <dbReference type="NCBI Taxonomy" id="290338"/>
    <lineage>
        <taxon>Bacteria</taxon>
        <taxon>Pseudomonadati</taxon>
        <taxon>Pseudomonadota</taxon>
        <taxon>Gammaproteobacteria</taxon>
        <taxon>Enterobacterales</taxon>
        <taxon>Enterobacteriaceae</taxon>
        <taxon>Citrobacter</taxon>
    </lineage>
</organism>
<evidence type="ECO:0000255" key="1">
    <source>
        <dbReference type="HAMAP-Rule" id="MF_00300"/>
    </source>
</evidence>
<reference key="1">
    <citation type="submission" date="2007-08" db="EMBL/GenBank/DDBJ databases">
        <authorList>
            <consortium name="The Citrobacter koseri Genome Sequencing Project"/>
            <person name="McClelland M."/>
            <person name="Sanderson E.K."/>
            <person name="Porwollik S."/>
            <person name="Spieth J."/>
            <person name="Clifton W.S."/>
            <person name="Latreille P."/>
            <person name="Courtney L."/>
            <person name="Wang C."/>
            <person name="Pepin K."/>
            <person name="Bhonagiri V."/>
            <person name="Nash W."/>
            <person name="Johnson M."/>
            <person name="Thiruvilangam P."/>
            <person name="Wilson R."/>
        </authorList>
    </citation>
    <scope>NUCLEOTIDE SEQUENCE [LARGE SCALE GENOMIC DNA]</scope>
    <source>
        <strain>ATCC BAA-895 / CDC 4225-83 / SGSC4696</strain>
    </source>
</reference>